<gene>
    <name evidence="1" type="primary">mnmA</name>
    <name type="synonym">trmU</name>
    <name type="synonym">twt415</name>
    <name type="ordered locus">TWT_415</name>
</gene>
<sequence length="359" mass="39153">MKVLAAMSGGVDSAVAAARAVDMGHDVVGVHLALSRSASGKRGCCTPRDAQDAAQAAQAIGIPFYVWDFSEEFQEKVIDNFISEYSAGRTPNPCLRCNEHIKFSSLLRRALALGFDAVCTGHYARVFLDEDGTYQLHRASSWAKDQSYVLAVLQQAQLKHCYFPLGATPSKKLVRQEADERGLKVSKKPDSHDVCFIPSSNTGAWLSQRIGRRDGDIIDDLGQRVGSHTGAFAYTVGQRKGLRLSSPAWDGKPRYVLDIEPISNTVVVGPRESLRVDELSGAFTTTGWCFTSRPIECSVQVRAHSDPVSAIAFIRDDVLVVRPDEPVFAVAKGQSAAIYRGTRVLGQLMIDNTKKYASS</sequence>
<comment type="function">
    <text evidence="1">Catalyzes the 2-thiolation of uridine at the wobble position (U34) of tRNA, leading to the formation of s(2)U34.</text>
</comment>
<comment type="catalytic activity">
    <reaction evidence="1">
        <text>S-sulfanyl-L-cysteinyl-[protein] + uridine(34) in tRNA + AH2 + ATP = 2-thiouridine(34) in tRNA + L-cysteinyl-[protein] + A + AMP + diphosphate + H(+)</text>
        <dbReference type="Rhea" id="RHEA:47032"/>
        <dbReference type="Rhea" id="RHEA-COMP:10131"/>
        <dbReference type="Rhea" id="RHEA-COMP:11726"/>
        <dbReference type="Rhea" id="RHEA-COMP:11727"/>
        <dbReference type="Rhea" id="RHEA-COMP:11728"/>
        <dbReference type="ChEBI" id="CHEBI:13193"/>
        <dbReference type="ChEBI" id="CHEBI:15378"/>
        <dbReference type="ChEBI" id="CHEBI:17499"/>
        <dbReference type="ChEBI" id="CHEBI:29950"/>
        <dbReference type="ChEBI" id="CHEBI:30616"/>
        <dbReference type="ChEBI" id="CHEBI:33019"/>
        <dbReference type="ChEBI" id="CHEBI:61963"/>
        <dbReference type="ChEBI" id="CHEBI:65315"/>
        <dbReference type="ChEBI" id="CHEBI:87170"/>
        <dbReference type="ChEBI" id="CHEBI:456215"/>
        <dbReference type="EC" id="2.8.1.13"/>
    </reaction>
</comment>
<comment type="subcellular location">
    <subcellularLocation>
        <location evidence="1">Cytoplasm</location>
    </subcellularLocation>
</comment>
<comment type="similarity">
    <text evidence="1">Belongs to the MnmA/TRMU family.</text>
</comment>
<feature type="chain" id="PRO_1000009594" description="tRNA-specific 2-thiouridylase MnmA">
    <location>
        <begin position="1"/>
        <end position="359"/>
    </location>
</feature>
<feature type="region of interest" description="Interaction with tRNA" evidence="1">
    <location>
        <begin position="144"/>
        <end position="146"/>
    </location>
</feature>
<feature type="active site" description="Nucleophile" evidence="1">
    <location>
        <position position="97"/>
    </location>
</feature>
<feature type="active site" description="Cysteine persulfide intermediate" evidence="1">
    <location>
        <position position="195"/>
    </location>
</feature>
<feature type="binding site" evidence="1">
    <location>
        <begin position="6"/>
        <end position="13"/>
    </location>
    <ligand>
        <name>ATP</name>
        <dbReference type="ChEBI" id="CHEBI:30616"/>
    </ligand>
</feature>
<feature type="binding site" evidence="1">
    <location>
        <position position="32"/>
    </location>
    <ligand>
        <name>ATP</name>
        <dbReference type="ChEBI" id="CHEBI:30616"/>
    </ligand>
</feature>
<feature type="binding site" evidence="1">
    <location>
        <position position="121"/>
    </location>
    <ligand>
        <name>ATP</name>
        <dbReference type="ChEBI" id="CHEBI:30616"/>
    </ligand>
</feature>
<feature type="site" description="Interaction with tRNA" evidence="1">
    <location>
        <position position="122"/>
    </location>
</feature>
<feature type="site" description="Interaction with tRNA" evidence="1">
    <location>
        <position position="334"/>
    </location>
</feature>
<feature type="disulfide bond" description="Alternate" evidence="1">
    <location>
        <begin position="97"/>
        <end position="195"/>
    </location>
</feature>
<name>MNMA_TROWT</name>
<protein>
    <recommendedName>
        <fullName evidence="1">tRNA-specific 2-thiouridylase MnmA</fullName>
        <ecNumber evidence="1">2.8.1.13</ecNumber>
    </recommendedName>
</protein>
<keyword id="KW-0067">ATP-binding</keyword>
<keyword id="KW-0963">Cytoplasm</keyword>
<keyword id="KW-1015">Disulfide bond</keyword>
<keyword id="KW-0547">Nucleotide-binding</keyword>
<keyword id="KW-1185">Reference proteome</keyword>
<keyword id="KW-0694">RNA-binding</keyword>
<keyword id="KW-0808">Transferase</keyword>
<keyword id="KW-0819">tRNA processing</keyword>
<keyword id="KW-0820">tRNA-binding</keyword>
<dbReference type="EC" id="2.8.1.13" evidence="1"/>
<dbReference type="EMBL" id="AE014184">
    <property type="protein sequence ID" value="AAO44512.1"/>
    <property type="molecule type" value="Genomic_DNA"/>
</dbReference>
<dbReference type="SMR" id="Q820Y1"/>
<dbReference type="STRING" id="203267.TWT_415"/>
<dbReference type="KEGG" id="twh:TWT_415"/>
<dbReference type="eggNOG" id="COG0482">
    <property type="taxonomic scope" value="Bacteria"/>
</dbReference>
<dbReference type="HOGENOM" id="CLU_035188_0_2_11"/>
<dbReference type="OrthoDB" id="9800696at2"/>
<dbReference type="Proteomes" id="UP000002200">
    <property type="component" value="Chromosome"/>
</dbReference>
<dbReference type="GO" id="GO:0005737">
    <property type="term" value="C:cytoplasm"/>
    <property type="evidence" value="ECO:0007669"/>
    <property type="project" value="UniProtKB-SubCell"/>
</dbReference>
<dbReference type="GO" id="GO:0005524">
    <property type="term" value="F:ATP binding"/>
    <property type="evidence" value="ECO:0007669"/>
    <property type="project" value="UniProtKB-KW"/>
</dbReference>
<dbReference type="GO" id="GO:0000049">
    <property type="term" value="F:tRNA binding"/>
    <property type="evidence" value="ECO:0007669"/>
    <property type="project" value="UniProtKB-KW"/>
</dbReference>
<dbReference type="GO" id="GO:0103016">
    <property type="term" value="F:tRNA-uridine 2-sulfurtransferase activity"/>
    <property type="evidence" value="ECO:0007669"/>
    <property type="project" value="UniProtKB-EC"/>
</dbReference>
<dbReference type="GO" id="GO:0002143">
    <property type="term" value="P:tRNA wobble position uridine thiolation"/>
    <property type="evidence" value="ECO:0007669"/>
    <property type="project" value="TreeGrafter"/>
</dbReference>
<dbReference type="CDD" id="cd01998">
    <property type="entry name" value="MnmA_TRMU-like"/>
    <property type="match status" value="1"/>
</dbReference>
<dbReference type="FunFam" id="3.40.50.620:FF:000057">
    <property type="entry name" value="tRNA-specific 2-thiouridylase MnmA"/>
    <property type="match status" value="1"/>
</dbReference>
<dbReference type="Gene3D" id="2.30.30.280">
    <property type="entry name" value="Adenine nucleotide alpha hydrolases-like domains"/>
    <property type="match status" value="1"/>
</dbReference>
<dbReference type="Gene3D" id="3.40.50.620">
    <property type="entry name" value="HUPs"/>
    <property type="match status" value="1"/>
</dbReference>
<dbReference type="Gene3D" id="2.40.30.10">
    <property type="entry name" value="Translation factors"/>
    <property type="match status" value="1"/>
</dbReference>
<dbReference type="HAMAP" id="MF_00144">
    <property type="entry name" value="tRNA_thiouridyl_MnmA"/>
    <property type="match status" value="1"/>
</dbReference>
<dbReference type="InterPro" id="IPR004506">
    <property type="entry name" value="MnmA-like"/>
</dbReference>
<dbReference type="InterPro" id="IPR046885">
    <property type="entry name" value="MnmA-like_C"/>
</dbReference>
<dbReference type="InterPro" id="IPR046884">
    <property type="entry name" value="MnmA-like_central"/>
</dbReference>
<dbReference type="InterPro" id="IPR023382">
    <property type="entry name" value="MnmA-like_central_sf"/>
</dbReference>
<dbReference type="InterPro" id="IPR014729">
    <property type="entry name" value="Rossmann-like_a/b/a_fold"/>
</dbReference>
<dbReference type="NCBIfam" id="NF001138">
    <property type="entry name" value="PRK00143.1"/>
    <property type="match status" value="1"/>
</dbReference>
<dbReference type="NCBIfam" id="TIGR00420">
    <property type="entry name" value="trmU"/>
    <property type="match status" value="1"/>
</dbReference>
<dbReference type="PANTHER" id="PTHR11933:SF5">
    <property type="entry name" value="MITOCHONDRIAL TRNA-SPECIFIC 2-THIOURIDYLASE 1"/>
    <property type="match status" value="1"/>
</dbReference>
<dbReference type="PANTHER" id="PTHR11933">
    <property type="entry name" value="TRNA 5-METHYLAMINOMETHYL-2-THIOURIDYLATE -METHYLTRANSFERASE"/>
    <property type="match status" value="1"/>
</dbReference>
<dbReference type="Pfam" id="PF03054">
    <property type="entry name" value="tRNA_Me_trans"/>
    <property type="match status" value="1"/>
</dbReference>
<dbReference type="Pfam" id="PF20258">
    <property type="entry name" value="tRNA_Me_trans_C"/>
    <property type="match status" value="1"/>
</dbReference>
<dbReference type="Pfam" id="PF20259">
    <property type="entry name" value="tRNA_Me_trans_M"/>
    <property type="match status" value="1"/>
</dbReference>
<dbReference type="SUPFAM" id="SSF52402">
    <property type="entry name" value="Adenine nucleotide alpha hydrolases-like"/>
    <property type="match status" value="1"/>
</dbReference>
<proteinExistence type="inferred from homology"/>
<evidence type="ECO:0000255" key="1">
    <source>
        <dbReference type="HAMAP-Rule" id="MF_00144"/>
    </source>
</evidence>
<accession>Q820Y1</accession>
<organism>
    <name type="scientific">Tropheryma whipplei (strain Twist)</name>
    <name type="common">Whipple's bacillus</name>
    <dbReference type="NCBI Taxonomy" id="203267"/>
    <lineage>
        <taxon>Bacteria</taxon>
        <taxon>Bacillati</taxon>
        <taxon>Actinomycetota</taxon>
        <taxon>Actinomycetes</taxon>
        <taxon>Micrococcales</taxon>
        <taxon>Tropherymataceae</taxon>
        <taxon>Tropheryma</taxon>
    </lineage>
</organism>
<reference key="1">
    <citation type="journal article" date="2003" name="Genome Res.">
        <title>Tropheryma whipplei twist: a human pathogenic Actinobacteria with a reduced genome.</title>
        <authorList>
            <person name="Raoult D."/>
            <person name="Ogata H."/>
            <person name="Audic S."/>
            <person name="Robert C."/>
            <person name="Suhre K."/>
            <person name="Drancourt M."/>
            <person name="Claverie J.-M."/>
        </authorList>
    </citation>
    <scope>NUCLEOTIDE SEQUENCE [LARGE SCALE GENOMIC DNA]</scope>
    <source>
        <strain>Twist</strain>
    </source>
</reference>